<proteinExistence type="inferred from homology"/>
<accession>A7FFF7</accession>
<comment type="function">
    <text evidence="1">Catalyzes the 2'-O-methylation at nucleotide C2498 in 23S rRNA.</text>
</comment>
<comment type="catalytic activity">
    <reaction evidence="1">
        <text>cytidine(2498) in 23S rRNA + S-adenosyl-L-methionine = 2'-O-methylcytidine(2498) in 23S rRNA + S-adenosyl-L-homocysteine + H(+)</text>
        <dbReference type="Rhea" id="RHEA:42788"/>
        <dbReference type="Rhea" id="RHEA-COMP:10244"/>
        <dbReference type="Rhea" id="RHEA-COMP:10245"/>
        <dbReference type="ChEBI" id="CHEBI:15378"/>
        <dbReference type="ChEBI" id="CHEBI:57856"/>
        <dbReference type="ChEBI" id="CHEBI:59789"/>
        <dbReference type="ChEBI" id="CHEBI:74495"/>
        <dbReference type="ChEBI" id="CHEBI:82748"/>
        <dbReference type="EC" id="2.1.1.186"/>
    </reaction>
</comment>
<comment type="subunit">
    <text evidence="1">Monomer.</text>
</comment>
<comment type="subcellular location">
    <subcellularLocation>
        <location evidence="1">Cytoplasm</location>
    </subcellularLocation>
</comment>
<comment type="similarity">
    <text evidence="1">Belongs to the class I-like SAM-binding methyltransferase superfamily. RNA methyltransferase RlmE family. RlmM subfamily.</text>
</comment>
<dbReference type="EC" id="2.1.1.186" evidence="1"/>
<dbReference type="EMBL" id="CP000720">
    <property type="protein sequence ID" value="ABS48942.1"/>
    <property type="molecule type" value="Genomic_DNA"/>
</dbReference>
<dbReference type="RefSeq" id="WP_002212119.1">
    <property type="nucleotide sequence ID" value="NC_009708.1"/>
</dbReference>
<dbReference type="SMR" id="A7FFF7"/>
<dbReference type="GeneID" id="57977530"/>
<dbReference type="KEGG" id="ypi:YpsIP31758_1001"/>
<dbReference type="HOGENOM" id="CLU_043780_0_0_6"/>
<dbReference type="Proteomes" id="UP000002412">
    <property type="component" value="Chromosome"/>
</dbReference>
<dbReference type="GO" id="GO:0005737">
    <property type="term" value="C:cytoplasm"/>
    <property type="evidence" value="ECO:0007669"/>
    <property type="project" value="UniProtKB-SubCell"/>
</dbReference>
<dbReference type="GO" id="GO:0008757">
    <property type="term" value="F:S-adenosylmethionine-dependent methyltransferase activity"/>
    <property type="evidence" value="ECO:0007669"/>
    <property type="project" value="UniProtKB-UniRule"/>
</dbReference>
<dbReference type="GO" id="GO:0032259">
    <property type="term" value="P:methylation"/>
    <property type="evidence" value="ECO:0007669"/>
    <property type="project" value="UniProtKB-KW"/>
</dbReference>
<dbReference type="GO" id="GO:0006364">
    <property type="term" value="P:rRNA processing"/>
    <property type="evidence" value="ECO:0007669"/>
    <property type="project" value="UniProtKB-UniRule"/>
</dbReference>
<dbReference type="Gene3D" id="3.30.2300.20">
    <property type="match status" value="1"/>
</dbReference>
<dbReference type="Gene3D" id="3.30.70.2810">
    <property type="match status" value="1"/>
</dbReference>
<dbReference type="Gene3D" id="3.40.50.150">
    <property type="entry name" value="Vaccinia Virus protein VP39"/>
    <property type="match status" value="1"/>
</dbReference>
<dbReference type="HAMAP" id="MF_01551">
    <property type="entry name" value="23SrRNA_methyltr_M"/>
    <property type="match status" value="1"/>
</dbReference>
<dbReference type="InterPro" id="IPR040739">
    <property type="entry name" value="RlmM_FDX"/>
</dbReference>
<dbReference type="InterPro" id="IPR048646">
    <property type="entry name" value="RlmM_THUMP-like"/>
</dbReference>
<dbReference type="InterPro" id="IPR002877">
    <property type="entry name" value="RNA_MeTrfase_FtsJ_dom"/>
</dbReference>
<dbReference type="InterPro" id="IPR011224">
    <property type="entry name" value="rRNA_MeTrfase_M"/>
</dbReference>
<dbReference type="InterPro" id="IPR029063">
    <property type="entry name" value="SAM-dependent_MTases_sf"/>
</dbReference>
<dbReference type="NCBIfam" id="NF008734">
    <property type="entry name" value="PRK11760.1"/>
    <property type="match status" value="1"/>
</dbReference>
<dbReference type="PANTHER" id="PTHR37524">
    <property type="entry name" value="RIBOSOMAL RNA LARGE SUBUNIT METHYLTRANSFERASE M"/>
    <property type="match status" value="1"/>
</dbReference>
<dbReference type="PANTHER" id="PTHR37524:SF2">
    <property type="entry name" value="RIBOSOMAL RNA METHYLTRANSFERASE FTSJ DOMAIN-CONTAINING PROTEIN"/>
    <property type="match status" value="1"/>
</dbReference>
<dbReference type="Pfam" id="PF01728">
    <property type="entry name" value="FtsJ"/>
    <property type="match status" value="1"/>
</dbReference>
<dbReference type="Pfam" id="PF18125">
    <property type="entry name" value="RlmM_FDX"/>
    <property type="match status" value="1"/>
</dbReference>
<dbReference type="Pfam" id="PF21239">
    <property type="entry name" value="RLMM_N"/>
    <property type="match status" value="1"/>
</dbReference>
<dbReference type="PIRSF" id="PIRSF028774">
    <property type="entry name" value="UCP028774"/>
    <property type="match status" value="1"/>
</dbReference>
<dbReference type="SUPFAM" id="SSF53335">
    <property type="entry name" value="S-adenosyl-L-methionine-dependent methyltransferases"/>
    <property type="match status" value="1"/>
</dbReference>
<keyword id="KW-0963">Cytoplasm</keyword>
<keyword id="KW-0489">Methyltransferase</keyword>
<keyword id="KW-0698">rRNA processing</keyword>
<keyword id="KW-0949">S-adenosyl-L-methionine</keyword>
<keyword id="KW-0808">Transferase</keyword>
<name>RLMM_YERP3</name>
<protein>
    <recommendedName>
        <fullName evidence="1">Ribosomal RNA large subunit methyltransferase M</fullName>
        <ecNumber evidence="1">2.1.1.186</ecNumber>
    </recommendedName>
    <alternativeName>
        <fullName evidence="1">23S rRNA (cytidine2498-2'-O)-methyltransferase</fullName>
    </alternativeName>
    <alternativeName>
        <fullName evidence="1">23S rRNA 2'-O-ribose methyltransferase RlmM</fullName>
    </alternativeName>
</protein>
<gene>
    <name evidence="1" type="primary">rlmM</name>
    <name type="ordered locus">YpsIP31758_1001</name>
</gene>
<evidence type="ECO:0000255" key="1">
    <source>
        <dbReference type="HAMAP-Rule" id="MF_01551"/>
    </source>
</evidence>
<reference key="1">
    <citation type="journal article" date="2007" name="PLoS Genet.">
        <title>The complete genome sequence of Yersinia pseudotuberculosis IP31758, the causative agent of Far East scarlet-like fever.</title>
        <authorList>
            <person name="Eppinger M."/>
            <person name="Rosovitz M.J."/>
            <person name="Fricke W.F."/>
            <person name="Rasko D.A."/>
            <person name="Kokorina G."/>
            <person name="Fayolle C."/>
            <person name="Lindler L.E."/>
            <person name="Carniel E."/>
            <person name="Ravel J."/>
        </authorList>
    </citation>
    <scope>NUCLEOTIDE SEQUENCE [LARGE SCALE GENOMIC DNA]</scope>
    <source>
        <strain>IP 31758</strain>
    </source>
</reference>
<organism>
    <name type="scientific">Yersinia pseudotuberculosis serotype O:1b (strain IP 31758)</name>
    <dbReference type="NCBI Taxonomy" id="349747"/>
    <lineage>
        <taxon>Bacteria</taxon>
        <taxon>Pseudomonadati</taxon>
        <taxon>Pseudomonadota</taxon>
        <taxon>Gammaproteobacteria</taxon>
        <taxon>Enterobacterales</taxon>
        <taxon>Yersiniaceae</taxon>
        <taxon>Yersinia</taxon>
    </lineage>
</organism>
<feature type="chain" id="PRO_1000073565" description="Ribosomal RNA large subunit methyltransferase M">
    <location>
        <begin position="1"/>
        <end position="368"/>
    </location>
</feature>
<feature type="active site" description="Proton acceptor" evidence="1">
    <location>
        <position position="307"/>
    </location>
</feature>
<feature type="binding site" evidence="1">
    <location>
        <position position="189"/>
    </location>
    <ligand>
        <name>S-adenosyl-L-methionine</name>
        <dbReference type="ChEBI" id="CHEBI:59789"/>
    </ligand>
</feature>
<feature type="binding site" evidence="1">
    <location>
        <begin position="222"/>
        <end position="225"/>
    </location>
    <ligand>
        <name>S-adenosyl-L-methionine</name>
        <dbReference type="ChEBI" id="CHEBI:59789"/>
    </ligand>
</feature>
<feature type="binding site" evidence="1">
    <location>
        <position position="241"/>
    </location>
    <ligand>
        <name>S-adenosyl-L-methionine</name>
        <dbReference type="ChEBI" id="CHEBI:59789"/>
    </ligand>
</feature>
<feature type="binding site" evidence="1">
    <location>
        <position position="261"/>
    </location>
    <ligand>
        <name>S-adenosyl-L-methionine</name>
        <dbReference type="ChEBI" id="CHEBI:59789"/>
    </ligand>
</feature>
<feature type="binding site" evidence="1">
    <location>
        <position position="278"/>
    </location>
    <ligand>
        <name>S-adenosyl-L-methionine</name>
        <dbReference type="ChEBI" id="CHEBI:59789"/>
    </ligand>
</feature>
<sequence length="368" mass="42307">MNNKIALYCRSGFEKECAAEITEKAAQLEIFGFARVKENSGYVLFECYQLEDADRLIREIPFREFIFARQMMVVGELLKDLPPEDRVSPIVGMLVGVIEKAGELRVEVADTNESKELLKFCRKLTVPLRSALREQKILSARENAHRPVVHVFFIAPGCCYVGYSYSNNNSPFYMGIPRLKFPSDAPSRSTLKLEEAFHVFIPADEWEERLASGMHAVDLGACPGGWTYQLVQRSMMIQAVDNGLMAQSLMDTGQVTHHRADGFKYEPTRSNIYWLVCDMVEKPTKVTQLITKWLVNGWCREAIFNLKLPMKKRYEEVVQNLAMMDEQLKENGINADIHAKQLYHDREEVTVHVRRIWSGAPGRRDERY</sequence>